<keyword id="KW-0227">DNA damage</keyword>
<keyword id="KW-0234">DNA repair</keyword>
<keyword id="KW-0238">DNA-binding</keyword>
<keyword id="KW-0326">Glycosidase</keyword>
<keyword id="KW-0378">Hydrolase</keyword>
<keyword id="KW-0456">Lyase</keyword>
<keyword id="KW-0479">Metal-binding</keyword>
<keyword id="KW-0511">Multifunctional enzyme</keyword>
<keyword id="KW-0862">Zinc</keyword>
<keyword id="KW-0863">Zinc-finger</keyword>
<comment type="function">
    <text evidence="2">Involved in base excision repair of DNA damaged by oxidation or by mutagenic agents. Acts as a DNA glycosylase that recognizes and removes damaged bases. Has a preference for oxidized purines, such as 7,8-dihydro-8-oxoguanine (8-oxoG). Has AP (apurinic/apyrimidinic) lyase activity and introduces nicks in the DNA strand. Cleaves the DNA backbone by beta-delta elimination to generate a single-strand break at the site of the removed base with both 3'- and 5'-phosphates.</text>
</comment>
<comment type="catalytic activity">
    <reaction evidence="2">
        <text>Hydrolysis of DNA containing ring-opened 7-methylguanine residues, releasing 2,6-diamino-4-hydroxy-5-(N-methyl)formamidopyrimidine.</text>
        <dbReference type="EC" id="3.2.2.23"/>
    </reaction>
</comment>
<comment type="catalytic activity">
    <reaction evidence="2">
        <text>2'-deoxyribonucleotide-(2'-deoxyribose 5'-phosphate)-2'-deoxyribonucleotide-DNA = a 3'-end 2'-deoxyribonucleotide-(2,3-dehydro-2,3-deoxyribose 5'-phosphate)-DNA + a 5'-end 5'-phospho-2'-deoxyribonucleoside-DNA + H(+)</text>
        <dbReference type="Rhea" id="RHEA:66592"/>
        <dbReference type="Rhea" id="RHEA-COMP:13180"/>
        <dbReference type="Rhea" id="RHEA-COMP:16897"/>
        <dbReference type="Rhea" id="RHEA-COMP:17067"/>
        <dbReference type="ChEBI" id="CHEBI:15378"/>
        <dbReference type="ChEBI" id="CHEBI:136412"/>
        <dbReference type="ChEBI" id="CHEBI:157695"/>
        <dbReference type="ChEBI" id="CHEBI:167181"/>
        <dbReference type="EC" id="4.2.99.18"/>
    </reaction>
</comment>
<comment type="cofactor">
    <cofactor evidence="2">
        <name>Zn(2+)</name>
        <dbReference type="ChEBI" id="CHEBI:29105"/>
    </cofactor>
    <text evidence="2">Binds 1 zinc ion per subunit.</text>
</comment>
<comment type="subunit">
    <text evidence="2">Monomer.</text>
</comment>
<comment type="similarity">
    <text evidence="2">Belongs to the FPG family.</text>
</comment>
<evidence type="ECO:0000250" key="1"/>
<evidence type="ECO:0000255" key="2">
    <source>
        <dbReference type="HAMAP-Rule" id="MF_00103"/>
    </source>
</evidence>
<sequence>MPELPEVETTRRGIAPYLEGQRVERVIVRERRLRWPIPEDLDVRLSGQRIVSVERRAKYLLLGAEAGTLISHLGMSGSLRLVESGTPASRHEHVDIELASGMSLRYTDPRRFGAMLWSLAPLEHELLRNLGPEPLTDAFAGQRLFELSRGRSMAVKPFIMDNAVVVGVGNIYASEALFAAGIDPRKPAGSISKARYLRLAEEIKRILAIAIERGGTTLRDFVGGDGQPGYFQQELFVYGRGGEFCKVCGSTLREIRLGQRASVYCPRCQR</sequence>
<protein>
    <recommendedName>
        <fullName evidence="2">Formamidopyrimidine-DNA glycosylase</fullName>
        <shortName evidence="2">Fapy-DNA glycosylase</shortName>
        <ecNumber evidence="2">3.2.2.23</ecNumber>
    </recommendedName>
    <alternativeName>
        <fullName evidence="2">DNA-(apurinic or apyrimidinic site) lyase MutM</fullName>
        <shortName evidence="2">AP lyase MutM</shortName>
        <ecNumber evidence="2">4.2.99.18</ecNumber>
    </alternativeName>
</protein>
<reference key="1">
    <citation type="submission" date="2007-06" db="EMBL/GenBank/DDBJ databases">
        <authorList>
            <person name="Dodson R.J."/>
            <person name="Harkins D."/>
            <person name="Paulsen I.T."/>
        </authorList>
    </citation>
    <scope>NUCLEOTIDE SEQUENCE [LARGE SCALE GENOMIC DNA]</scope>
    <source>
        <strain>DSM 24068 / PA7</strain>
    </source>
</reference>
<feature type="initiator methionine" description="Removed" evidence="1">
    <location>
        <position position="1"/>
    </location>
</feature>
<feature type="chain" id="PRO_1000008741" description="Formamidopyrimidine-DNA glycosylase">
    <location>
        <begin position="2"/>
        <end position="270"/>
    </location>
</feature>
<feature type="zinc finger region" description="FPG-type" evidence="2">
    <location>
        <begin position="236"/>
        <end position="270"/>
    </location>
</feature>
<feature type="active site" description="Schiff-base intermediate with DNA" evidence="2">
    <location>
        <position position="2"/>
    </location>
</feature>
<feature type="active site" description="Proton donor" evidence="2">
    <location>
        <position position="3"/>
    </location>
</feature>
<feature type="active site" description="Proton donor; for beta-elimination activity" evidence="2">
    <location>
        <position position="58"/>
    </location>
</feature>
<feature type="active site" description="Proton donor; for delta-elimination activity" evidence="2">
    <location>
        <position position="260"/>
    </location>
</feature>
<feature type="binding site" evidence="2">
    <location>
        <position position="91"/>
    </location>
    <ligand>
        <name>DNA</name>
        <dbReference type="ChEBI" id="CHEBI:16991"/>
    </ligand>
</feature>
<feature type="binding site" evidence="2">
    <location>
        <position position="110"/>
    </location>
    <ligand>
        <name>DNA</name>
        <dbReference type="ChEBI" id="CHEBI:16991"/>
    </ligand>
</feature>
<feature type="binding site" evidence="2">
    <location>
        <position position="151"/>
    </location>
    <ligand>
        <name>DNA</name>
        <dbReference type="ChEBI" id="CHEBI:16991"/>
    </ligand>
</feature>
<dbReference type="EC" id="3.2.2.23" evidence="2"/>
<dbReference type="EC" id="4.2.99.18" evidence="2"/>
<dbReference type="EMBL" id="CP000744">
    <property type="protein sequence ID" value="ABR83299.1"/>
    <property type="molecule type" value="Genomic_DNA"/>
</dbReference>
<dbReference type="RefSeq" id="WP_004368457.1">
    <property type="nucleotide sequence ID" value="NC_009656.1"/>
</dbReference>
<dbReference type="SMR" id="A6UYG0"/>
<dbReference type="GeneID" id="77218877"/>
<dbReference type="KEGG" id="pap:PSPA7_0450"/>
<dbReference type="HOGENOM" id="CLU_038423_1_1_6"/>
<dbReference type="Proteomes" id="UP000001582">
    <property type="component" value="Chromosome"/>
</dbReference>
<dbReference type="GO" id="GO:0034039">
    <property type="term" value="F:8-oxo-7,8-dihydroguanine DNA N-glycosylase activity"/>
    <property type="evidence" value="ECO:0007669"/>
    <property type="project" value="TreeGrafter"/>
</dbReference>
<dbReference type="GO" id="GO:0140078">
    <property type="term" value="F:class I DNA-(apurinic or apyrimidinic site) endonuclease activity"/>
    <property type="evidence" value="ECO:0007669"/>
    <property type="project" value="UniProtKB-EC"/>
</dbReference>
<dbReference type="GO" id="GO:0003684">
    <property type="term" value="F:damaged DNA binding"/>
    <property type="evidence" value="ECO:0007669"/>
    <property type="project" value="InterPro"/>
</dbReference>
<dbReference type="GO" id="GO:0008270">
    <property type="term" value="F:zinc ion binding"/>
    <property type="evidence" value="ECO:0007669"/>
    <property type="project" value="UniProtKB-UniRule"/>
</dbReference>
<dbReference type="GO" id="GO:0006284">
    <property type="term" value="P:base-excision repair"/>
    <property type="evidence" value="ECO:0007669"/>
    <property type="project" value="InterPro"/>
</dbReference>
<dbReference type="CDD" id="cd08966">
    <property type="entry name" value="EcFpg-like_N"/>
    <property type="match status" value="1"/>
</dbReference>
<dbReference type="FunFam" id="1.10.8.50:FF:000003">
    <property type="entry name" value="Formamidopyrimidine-DNA glycosylase"/>
    <property type="match status" value="1"/>
</dbReference>
<dbReference type="FunFam" id="3.20.190.10:FF:000001">
    <property type="entry name" value="Formamidopyrimidine-DNA glycosylase"/>
    <property type="match status" value="1"/>
</dbReference>
<dbReference type="Gene3D" id="1.10.8.50">
    <property type="match status" value="1"/>
</dbReference>
<dbReference type="Gene3D" id="3.20.190.10">
    <property type="entry name" value="MutM-like, N-terminal"/>
    <property type="match status" value="1"/>
</dbReference>
<dbReference type="HAMAP" id="MF_00103">
    <property type="entry name" value="Fapy_DNA_glycosyl"/>
    <property type="match status" value="1"/>
</dbReference>
<dbReference type="InterPro" id="IPR015886">
    <property type="entry name" value="DNA_glyclase/AP_lyase_DNA-bd"/>
</dbReference>
<dbReference type="InterPro" id="IPR015887">
    <property type="entry name" value="DNA_glyclase_Znf_dom_DNA_BS"/>
</dbReference>
<dbReference type="InterPro" id="IPR020629">
    <property type="entry name" value="Formamido-pyr_DNA_Glyclase"/>
</dbReference>
<dbReference type="InterPro" id="IPR012319">
    <property type="entry name" value="FPG_cat"/>
</dbReference>
<dbReference type="InterPro" id="IPR035937">
    <property type="entry name" value="MutM-like_N-ter"/>
</dbReference>
<dbReference type="InterPro" id="IPR010979">
    <property type="entry name" value="Ribosomal_uS13-like_H2TH"/>
</dbReference>
<dbReference type="InterPro" id="IPR000214">
    <property type="entry name" value="Znf_DNA_glyclase/AP_lyase"/>
</dbReference>
<dbReference type="InterPro" id="IPR010663">
    <property type="entry name" value="Znf_FPG/IleRS"/>
</dbReference>
<dbReference type="NCBIfam" id="TIGR00577">
    <property type="entry name" value="fpg"/>
    <property type="match status" value="1"/>
</dbReference>
<dbReference type="NCBIfam" id="NF002211">
    <property type="entry name" value="PRK01103.1"/>
    <property type="match status" value="1"/>
</dbReference>
<dbReference type="PANTHER" id="PTHR22993">
    <property type="entry name" value="FORMAMIDOPYRIMIDINE-DNA GLYCOSYLASE"/>
    <property type="match status" value="1"/>
</dbReference>
<dbReference type="PANTHER" id="PTHR22993:SF9">
    <property type="entry name" value="FORMAMIDOPYRIMIDINE-DNA GLYCOSYLASE"/>
    <property type="match status" value="1"/>
</dbReference>
<dbReference type="Pfam" id="PF01149">
    <property type="entry name" value="Fapy_DNA_glyco"/>
    <property type="match status" value="1"/>
</dbReference>
<dbReference type="Pfam" id="PF06831">
    <property type="entry name" value="H2TH"/>
    <property type="match status" value="1"/>
</dbReference>
<dbReference type="Pfam" id="PF06827">
    <property type="entry name" value="zf-FPG_IleRS"/>
    <property type="match status" value="1"/>
</dbReference>
<dbReference type="SMART" id="SM00898">
    <property type="entry name" value="Fapy_DNA_glyco"/>
    <property type="match status" value="1"/>
</dbReference>
<dbReference type="SMART" id="SM01232">
    <property type="entry name" value="H2TH"/>
    <property type="match status" value="1"/>
</dbReference>
<dbReference type="SUPFAM" id="SSF57716">
    <property type="entry name" value="Glucocorticoid receptor-like (DNA-binding domain)"/>
    <property type="match status" value="1"/>
</dbReference>
<dbReference type="SUPFAM" id="SSF81624">
    <property type="entry name" value="N-terminal domain of MutM-like DNA repair proteins"/>
    <property type="match status" value="1"/>
</dbReference>
<dbReference type="SUPFAM" id="SSF46946">
    <property type="entry name" value="S13-like H2TH domain"/>
    <property type="match status" value="1"/>
</dbReference>
<dbReference type="PROSITE" id="PS51068">
    <property type="entry name" value="FPG_CAT"/>
    <property type="match status" value="1"/>
</dbReference>
<dbReference type="PROSITE" id="PS01242">
    <property type="entry name" value="ZF_FPG_1"/>
    <property type="match status" value="1"/>
</dbReference>
<dbReference type="PROSITE" id="PS51066">
    <property type="entry name" value="ZF_FPG_2"/>
    <property type="match status" value="1"/>
</dbReference>
<name>FPG_PSEP7</name>
<proteinExistence type="inferred from homology"/>
<gene>
    <name evidence="2" type="primary">mutM</name>
    <name evidence="2" type="synonym">fpg</name>
    <name type="ordered locus">PSPA7_0450</name>
</gene>
<accession>A6UYG0</accession>
<organism>
    <name type="scientific">Pseudomonas paraeruginosa (strain DSM 24068 / PA7)</name>
    <name type="common">Pseudomonas aeruginosa (strain PA7)</name>
    <dbReference type="NCBI Taxonomy" id="381754"/>
    <lineage>
        <taxon>Bacteria</taxon>
        <taxon>Pseudomonadati</taxon>
        <taxon>Pseudomonadota</taxon>
        <taxon>Gammaproteobacteria</taxon>
        <taxon>Pseudomonadales</taxon>
        <taxon>Pseudomonadaceae</taxon>
        <taxon>Pseudomonas</taxon>
        <taxon>Pseudomonas paraeruginosa</taxon>
    </lineage>
</organism>